<name>DAPF_PASMU</name>
<organism>
    <name type="scientific">Pasteurella multocida (strain Pm70)</name>
    <dbReference type="NCBI Taxonomy" id="272843"/>
    <lineage>
        <taxon>Bacteria</taxon>
        <taxon>Pseudomonadati</taxon>
        <taxon>Pseudomonadota</taxon>
        <taxon>Gammaproteobacteria</taxon>
        <taxon>Pasteurellales</taxon>
        <taxon>Pasteurellaceae</taxon>
        <taxon>Pasteurella</taxon>
    </lineage>
</organism>
<gene>
    <name evidence="1" type="primary">dapF</name>
    <name type="ordered locus">PM1703</name>
</gene>
<comment type="function">
    <text evidence="1">Catalyzes the stereoinversion of LL-2,6-diaminopimelate (L,L-DAP) to meso-diaminopimelate (meso-DAP), a precursor of L-lysine and an essential component of the bacterial peptidoglycan.</text>
</comment>
<comment type="catalytic activity">
    <reaction evidence="1">
        <text>(2S,6S)-2,6-diaminopimelate = meso-2,6-diaminopimelate</text>
        <dbReference type="Rhea" id="RHEA:15393"/>
        <dbReference type="ChEBI" id="CHEBI:57609"/>
        <dbReference type="ChEBI" id="CHEBI:57791"/>
        <dbReference type="EC" id="5.1.1.7"/>
    </reaction>
</comment>
<comment type="pathway">
    <text evidence="1">Amino-acid biosynthesis; L-lysine biosynthesis via DAP pathway; DL-2,6-diaminopimelate from LL-2,6-diaminopimelate: step 1/1.</text>
</comment>
<comment type="subunit">
    <text evidence="1">Homodimer.</text>
</comment>
<comment type="subcellular location">
    <subcellularLocation>
        <location evidence="1">Cytoplasm</location>
    </subcellularLocation>
</comment>
<comment type="similarity">
    <text evidence="1">Belongs to the diaminopimelate epimerase family.</text>
</comment>
<evidence type="ECO:0000255" key="1">
    <source>
        <dbReference type="HAMAP-Rule" id="MF_00197"/>
    </source>
</evidence>
<sequence>MQFSKMHGLGNDFVVVDAITQNLYFSPETIKRLADRHRGIGFDQMLIVEPPYDPDLDFHYRIFNADGSEVSQCGNGARCFARFVTLKGLTDKKDIAVSTQTGKMILSIKDDGMIRINMGEPIWEPAKIPFTANKFEKNYILRTSIQTVLCGAVSMGNPHCVVQVDDIQTANVEQLGPLLENHERFPERVNAGFMQVIHRGHIKLRVYERGAGETQACGSGACAAVAVGVMQGLLDSKVQVDLPGGSLIIEWEGVGKPLFMTGDATHVYDGVIRL</sequence>
<keyword id="KW-0028">Amino-acid biosynthesis</keyword>
<keyword id="KW-0963">Cytoplasm</keyword>
<keyword id="KW-0413">Isomerase</keyword>
<keyword id="KW-0457">Lysine biosynthesis</keyword>
<keyword id="KW-1185">Reference proteome</keyword>
<protein>
    <recommendedName>
        <fullName evidence="1">Diaminopimelate epimerase</fullName>
        <shortName evidence="1">DAP epimerase</shortName>
        <ecNumber evidence="1">5.1.1.7</ecNumber>
    </recommendedName>
    <alternativeName>
        <fullName evidence="1">PLP-independent amino acid racemase</fullName>
    </alternativeName>
</protein>
<dbReference type="EC" id="5.1.1.7" evidence="1"/>
<dbReference type="EMBL" id="AE004439">
    <property type="protein sequence ID" value="AAK03787.1"/>
    <property type="molecule type" value="Genomic_DNA"/>
</dbReference>
<dbReference type="RefSeq" id="WP_005724589.1">
    <property type="nucleotide sequence ID" value="NC_002663.1"/>
</dbReference>
<dbReference type="SMR" id="P57962"/>
<dbReference type="STRING" id="272843.PM1703"/>
<dbReference type="EnsemblBacteria" id="AAK03787">
    <property type="protein sequence ID" value="AAK03787"/>
    <property type="gene ID" value="PM1703"/>
</dbReference>
<dbReference type="GeneID" id="77206624"/>
<dbReference type="KEGG" id="pmu:PM1703"/>
<dbReference type="PATRIC" id="fig|272843.6.peg.1724"/>
<dbReference type="HOGENOM" id="CLU_053306_1_1_6"/>
<dbReference type="OrthoDB" id="9805408at2"/>
<dbReference type="UniPathway" id="UPA00034">
    <property type="reaction ID" value="UER00025"/>
</dbReference>
<dbReference type="Proteomes" id="UP000000809">
    <property type="component" value="Chromosome"/>
</dbReference>
<dbReference type="GO" id="GO:0005829">
    <property type="term" value="C:cytosol"/>
    <property type="evidence" value="ECO:0007669"/>
    <property type="project" value="TreeGrafter"/>
</dbReference>
<dbReference type="GO" id="GO:0008837">
    <property type="term" value="F:diaminopimelate epimerase activity"/>
    <property type="evidence" value="ECO:0007669"/>
    <property type="project" value="UniProtKB-UniRule"/>
</dbReference>
<dbReference type="GO" id="GO:0009089">
    <property type="term" value="P:lysine biosynthetic process via diaminopimelate"/>
    <property type="evidence" value="ECO:0007669"/>
    <property type="project" value="UniProtKB-UniRule"/>
</dbReference>
<dbReference type="FunFam" id="3.10.310.10:FF:000001">
    <property type="entry name" value="Diaminopimelate epimerase"/>
    <property type="match status" value="1"/>
</dbReference>
<dbReference type="FunFam" id="3.10.310.10:FF:000002">
    <property type="entry name" value="Diaminopimelate epimerase"/>
    <property type="match status" value="1"/>
</dbReference>
<dbReference type="Gene3D" id="3.10.310.10">
    <property type="entry name" value="Diaminopimelate Epimerase, Chain A, domain 1"/>
    <property type="match status" value="2"/>
</dbReference>
<dbReference type="HAMAP" id="MF_00197">
    <property type="entry name" value="DAP_epimerase"/>
    <property type="match status" value="1"/>
</dbReference>
<dbReference type="InterPro" id="IPR018510">
    <property type="entry name" value="DAP_epimerase_AS"/>
</dbReference>
<dbReference type="InterPro" id="IPR001653">
    <property type="entry name" value="DAP_epimerase_DapF"/>
</dbReference>
<dbReference type="NCBIfam" id="TIGR00652">
    <property type="entry name" value="DapF"/>
    <property type="match status" value="1"/>
</dbReference>
<dbReference type="PANTHER" id="PTHR31689:SF0">
    <property type="entry name" value="DIAMINOPIMELATE EPIMERASE"/>
    <property type="match status" value="1"/>
</dbReference>
<dbReference type="PANTHER" id="PTHR31689">
    <property type="entry name" value="DIAMINOPIMELATE EPIMERASE, CHLOROPLASTIC"/>
    <property type="match status" value="1"/>
</dbReference>
<dbReference type="Pfam" id="PF01678">
    <property type="entry name" value="DAP_epimerase"/>
    <property type="match status" value="2"/>
</dbReference>
<dbReference type="SUPFAM" id="SSF54506">
    <property type="entry name" value="Diaminopimelate epimerase-like"/>
    <property type="match status" value="1"/>
</dbReference>
<dbReference type="PROSITE" id="PS01326">
    <property type="entry name" value="DAP_EPIMERASE"/>
    <property type="match status" value="1"/>
</dbReference>
<reference key="1">
    <citation type="journal article" date="2001" name="Proc. Natl. Acad. Sci. U.S.A.">
        <title>Complete genomic sequence of Pasteurella multocida Pm70.</title>
        <authorList>
            <person name="May B.J."/>
            <person name="Zhang Q."/>
            <person name="Li L.L."/>
            <person name="Paustian M.L."/>
            <person name="Whittam T.S."/>
            <person name="Kapur V."/>
        </authorList>
    </citation>
    <scope>NUCLEOTIDE SEQUENCE [LARGE SCALE GENOMIC DNA]</scope>
    <source>
        <strain>Pm70</strain>
    </source>
</reference>
<feature type="chain" id="PRO_0000149858" description="Diaminopimelate epimerase">
    <location>
        <begin position="1"/>
        <end position="274"/>
    </location>
</feature>
<feature type="active site" description="Proton donor" evidence="1">
    <location>
        <position position="73"/>
    </location>
</feature>
<feature type="active site" description="Proton acceptor" evidence="1">
    <location>
        <position position="217"/>
    </location>
</feature>
<feature type="binding site" evidence="1">
    <location>
        <position position="11"/>
    </location>
    <ligand>
        <name>substrate</name>
    </ligand>
</feature>
<feature type="binding site" evidence="1">
    <location>
        <position position="44"/>
    </location>
    <ligand>
        <name>substrate</name>
    </ligand>
</feature>
<feature type="binding site" evidence="1">
    <location>
        <position position="64"/>
    </location>
    <ligand>
        <name>substrate</name>
    </ligand>
</feature>
<feature type="binding site" evidence="1">
    <location>
        <begin position="74"/>
        <end position="75"/>
    </location>
    <ligand>
        <name>substrate</name>
    </ligand>
</feature>
<feature type="binding site" evidence="1">
    <location>
        <position position="157"/>
    </location>
    <ligand>
        <name>substrate</name>
    </ligand>
</feature>
<feature type="binding site" evidence="1">
    <location>
        <position position="190"/>
    </location>
    <ligand>
        <name>substrate</name>
    </ligand>
</feature>
<feature type="binding site" evidence="1">
    <location>
        <begin position="208"/>
        <end position="209"/>
    </location>
    <ligand>
        <name>substrate</name>
    </ligand>
</feature>
<feature type="binding site" evidence="1">
    <location>
        <begin position="218"/>
        <end position="219"/>
    </location>
    <ligand>
        <name>substrate</name>
    </ligand>
</feature>
<feature type="site" description="Could be important to modulate the pK values of the two catalytic cysteine residues" evidence="1">
    <location>
        <position position="159"/>
    </location>
</feature>
<feature type="site" description="Could be important to modulate the pK values of the two catalytic cysteine residues" evidence="1">
    <location>
        <position position="208"/>
    </location>
</feature>
<feature type="site" description="Important for dimerization" evidence="1">
    <location>
        <position position="268"/>
    </location>
</feature>
<proteinExistence type="inferred from homology"/>
<accession>P57962</accession>